<organism>
    <name type="scientific">Neisseria meningitidis serogroup C (strain 053442)</name>
    <dbReference type="NCBI Taxonomy" id="374833"/>
    <lineage>
        <taxon>Bacteria</taxon>
        <taxon>Pseudomonadati</taxon>
        <taxon>Pseudomonadota</taxon>
        <taxon>Betaproteobacteria</taxon>
        <taxon>Neisseriales</taxon>
        <taxon>Neisseriaceae</taxon>
        <taxon>Neisseria</taxon>
    </lineage>
</organism>
<accession>A9M4B4</accession>
<evidence type="ECO:0000255" key="1">
    <source>
        <dbReference type="HAMAP-Rule" id="MF_01582"/>
    </source>
</evidence>
<reference key="1">
    <citation type="journal article" date="2008" name="Genomics">
        <title>Characterization of ST-4821 complex, a unique Neisseria meningitidis clone.</title>
        <authorList>
            <person name="Peng J."/>
            <person name="Yang L."/>
            <person name="Yang F."/>
            <person name="Yang J."/>
            <person name="Yan Y."/>
            <person name="Nie H."/>
            <person name="Zhang X."/>
            <person name="Xiong Z."/>
            <person name="Jiang Y."/>
            <person name="Cheng F."/>
            <person name="Xu X."/>
            <person name="Chen S."/>
            <person name="Sun L."/>
            <person name="Li W."/>
            <person name="Shen Y."/>
            <person name="Shao Z."/>
            <person name="Liang X."/>
            <person name="Xu J."/>
            <person name="Jin Q."/>
        </authorList>
    </citation>
    <scope>NUCLEOTIDE SEQUENCE [LARGE SCALE GENOMIC DNA]</scope>
    <source>
        <strain>053442</strain>
    </source>
</reference>
<protein>
    <recommendedName>
        <fullName evidence="1">Serine/threonine transporter SstT</fullName>
    </recommendedName>
    <alternativeName>
        <fullName evidence="1">Na(+)/serine-threonine symporter</fullName>
    </alternativeName>
</protein>
<name>SSTT_NEIM0</name>
<sequence length="409" mass="42003">MAFGKSLFHAIGRVSLVRQIAAGLALGIVIGSVSPQLGLAAGLFGSLFVGALKAVAPVLVFILVAATIAQHQKGNKAHIRPIIVLYLIGTFSAALTAVIAGMVFPTHIVLAGAGDVSAAPPSGIVEVLKSLLMNLVANPINAIANANYIGILAWALVLGAALRNHGSDVTRQVVADLAEAVSTVVKWIIRFAPLGIFGLVSSTIAETGFGALAGYAKLLAVLLGCMAFIALVVNPAIVWWKIRRNPYPLVFTCLRESGVYAFFTRSSAANIPVNMALAKKLGLHEDTYSISIPLGATVNMGGAAITITVLAMAAAHTQGIQVDFATALLLSLVATVSACGASGVAGGSLLLIPLACSLFGISNDVAMQVVAVGFIIGVIQDSAETALNSSTDVLFTAAADLCRQRNRAE</sequence>
<gene>
    <name evidence="1" type="primary">sstT</name>
    <name type="ordered locus">NMCC_2090</name>
</gene>
<dbReference type="EMBL" id="CP000381">
    <property type="protein sequence ID" value="ABX74208.1"/>
    <property type="molecule type" value="Genomic_DNA"/>
</dbReference>
<dbReference type="RefSeq" id="WP_012222164.1">
    <property type="nucleotide sequence ID" value="NC_010120.1"/>
</dbReference>
<dbReference type="SMR" id="A9M4B4"/>
<dbReference type="KEGG" id="nmn:NMCC_2090"/>
<dbReference type="HOGENOM" id="CLU_044581_0_0_4"/>
<dbReference type="Proteomes" id="UP000001177">
    <property type="component" value="Chromosome"/>
</dbReference>
<dbReference type="GO" id="GO:0005886">
    <property type="term" value="C:plasma membrane"/>
    <property type="evidence" value="ECO:0007669"/>
    <property type="project" value="UniProtKB-SubCell"/>
</dbReference>
<dbReference type="GO" id="GO:0005295">
    <property type="term" value="F:neutral L-amino acid:sodium symporter activity"/>
    <property type="evidence" value="ECO:0007669"/>
    <property type="project" value="TreeGrafter"/>
</dbReference>
<dbReference type="GO" id="GO:0032329">
    <property type="term" value="P:serine transport"/>
    <property type="evidence" value="ECO:0007669"/>
    <property type="project" value="InterPro"/>
</dbReference>
<dbReference type="GO" id="GO:0015826">
    <property type="term" value="P:threonine transport"/>
    <property type="evidence" value="ECO:0007669"/>
    <property type="project" value="InterPro"/>
</dbReference>
<dbReference type="FunFam" id="1.10.3860.10:FF:000003">
    <property type="entry name" value="Serine/threonine transporter sstT"/>
    <property type="match status" value="1"/>
</dbReference>
<dbReference type="Gene3D" id="1.10.3860.10">
    <property type="entry name" value="Sodium:dicarboxylate symporter"/>
    <property type="match status" value="1"/>
</dbReference>
<dbReference type="HAMAP" id="MF_01582">
    <property type="entry name" value="Ser_Thr_transp_SstT"/>
    <property type="match status" value="1"/>
</dbReference>
<dbReference type="InterPro" id="IPR001991">
    <property type="entry name" value="Na-dicarboxylate_symporter"/>
</dbReference>
<dbReference type="InterPro" id="IPR036458">
    <property type="entry name" value="Na:dicarbo_symporter_sf"/>
</dbReference>
<dbReference type="InterPro" id="IPR023025">
    <property type="entry name" value="Ser_Thr_transp_SstT"/>
</dbReference>
<dbReference type="NCBIfam" id="NF010151">
    <property type="entry name" value="PRK13628.1"/>
    <property type="match status" value="1"/>
</dbReference>
<dbReference type="PANTHER" id="PTHR42865">
    <property type="entry name" value="PROTON/GLUTAMATE-ASPARTATE SYMPORTER"/>
    <property type="match status" value="1"/>
</dbReference>
<dbReference type="PANTHER" id="PTHR42865:SF8">
    <property type="entry name" value="SERINE_THREONINE TRANSPORTER SSTT"/>
    <property type="match status" value="1"/>
</dbReference>
<dbReference type="Pfam" id="PF00375">
    <property type="entry name" value="SDF"/>
    <property type="match status" value="1"/>
</dbReference>
<dbReference type="PRINTS" id="PR00173">
    <property type="entry name" value="EDTRNSPORT"/>
</dbReference>
<dbReference type="SUPFAM" id="SSF118215">
    <property type="entry name" value="Proton glutamate symport protein"/>
    <property type="match status" value="1"/>
</dbReference>
<proteinExistence type="inferred from homology"/>
<keyword id="KW-0029">Amino-acid transport</keyword>
<keyword id="KW-0997">Cell inner membrane</keyword>
<keyword id="KW-1003">Cell membrane</keyword>
<keyword id="KW-0472">Membrane</keyword>
<keyword id="KW-0769">Symport</keyword>
<keyword id="KW-0812">Transmembrane</keyword>
<keyword id="KW-1133">Transmembrane helix</keyword>
<keyword id="KW-0813">Transport</keyword>
<feature type="chain" id="PRO_1000087935" description="Serine/threonine transporter SstT">
    <location>
        <begin position="1"/>
        <end position="409"/>
    </location>
</feature>
<feature type="transmembrane region" description="Helical" evidence="1">
    <location>
        <begin position="24"/>
        <end position="44"/>
    </location>
</feature>
<feature type="transmembrane region" description="Helical" evidence="1">
    <location>
        <begin position="48"/>
        <end position="68"/>
    </location>
</feature>
<feature type="transmembrane region" description="Helical" evidence="1">
    <location>
        <begin position="82"/>
        <end position="102"/>
    </location>
</feature>
<feature type="transmembrane region" description="Helical" evidence="1">
    <location>
        <begin position="142"/>
        <end position="162"/>
    </location>
</feature>
<feature type="transmembrane region" description="Helical" evidence="1">
    <location>
        <begin position="194"/>
        <end position="214"/>
    </location>
</feature>
<feature type="transmembrane region" description="Helical" evidence="1">
    <location>
        <begin position="218"/>
        <end position="238"/>
    </location>
</feature>
<feature type="transmembrane region" description="Helical" evidence="1">
    <location>
        <begin position="292"/>
        <end position="312"/>
    </location>
</feature>
<feature type="transmembrane region" description="Helical" evidence="1">
    <location>
        <begin position="319"/>
        <end position="339"/>
    </location>
</feature>
<feature type="transmembrane region" description="Helical" evidence="1">
    <location>
        <begin position="365"/>
        <end position="385"/>
    </location>
</feature>
<comment type="function">
    <text evidence="1">Involved in the import of serine and threonine into the cell, with the concomitant import of sodium (symport system).</text>
</comment>
<comment type="catalytic activity">
    <reaction evidence="1">
        <text>L-serine(in) + Na(+)(in) = L-serine(out) + Na(+)(out)</text>
        <dbReference type="Rhea" id="RHEA:29575"/>
        <dbReference type="ChEBI" id="CHEBI:29101"/>
        <dbReference type="ChEBI" id="CHEBI:33384"/>
    </reaction>
    <physiologicalReaction direction="right-to-left" evidence="1">
        <dbReference type="Rhea" id="RHEA:29577"/>
    </physiologicalReaction>
</comment>
<comment type="catalytic activity">
    <reaction evidence="1">
        <text>L-threonine(in) + Na(+)(in) = L-threonine(out) + Na(+)(out)</text>
        <dbReference type="Rhea" id="RHEA:69999"/>
        <dbReference type="ChEBI" id="CHEBI:29101"/>
        <dbReference type="ChEBI" id="CHEBI:57926"/>
    </reaction>
    <physiologicalReaction direction="right-to-left" evidence="1">
        <dbReference type="Rhea" id="RHEA:70001"/>
    </physiologicalReaction>
</comment>
<comment type="subcellular location">
    <subcellularLocation>
        <location evidence="1">Cell inner membrane</location>
        <topology evidence="1">Multi-pass membrane protein</topology>
    </subcellularLocation>
</comment>
<comment type="similarity">
    <text evidence="1">Belongs to the dicarboxylate/amino acid:cation symporter (DAACS) (TC 2.A.23) family.</text>
</comment>